<evidence type="ECO:0000250" key="1"/>
<evidence type="ECO:0000255" key="2"/>
<evidence type="ECO:0000305" key="3"/>
<feature type="signal peptide" evidence="2">
    <location>
        <begin position="1"/>
        <end position="19"/>
    </location>
</feature>
<feature type="chain" id="PRO_0000399077" description="Increased recombination centers protein 22-2">
    <location>
        <begin position="20"/>
        <end position="236"/>
    </location>
</feature>
<feature type="topological domain" description="Lumenal" evidence="2">
    <location>
        <begin position="20"/>
        <end position="161"/>
    </location>
</feature>
<feature type="transmembrane region" description="Helical" evidence="2">
    <location>
        <begin position="162"/>
        <end position="182"/>
    </location>
</feature>
<feature type="topological domain" description="Cytoplasmic" evidence="2">
    <location>
        <begin position="183"/>
        <end position="236"/>
    </location>
</feature>
<proteinExistence type="inferred from homology"/>
<comment type="function">
    <text>Is probably involved in a pathway contributing to genomic integrity.</text>
</comment>
<comment type="subcellular location">
    <subcellularLocation>
        <location evidence="1">Endoplasmic reticulum membrane</location>
        <topology evidence="1">Single-pass type I membrane protein</topology>
    </subcellularLocation>
</comment>
<comment type="similarity">
    <text evidence="3">Belongs to the IRC22 family.</text>
</comment>
<reference key="1">
    <citation type="journal article" date="2009" name="Nature">
        <title>Evolution of pathogenicity and sexual reproduction in eight Candida genomes.</title>
        <authorList>
            <person name="Butler G."/>
            <person name="Rasmussen M.D."/>
            <person name="Lin M.F."/>
            <person name="Santos M.A.S."/>
            <person name="Sakthikumar S."/>
            <person name="Munro C.A."/>
            <person name="Rheinbay E."/>
            <person name="Grabherr M."/>
            <person name="Forche A."/>
            <person name="Reedy J.L."/>
            <person name="Agrafioti I."/>
            <person name="Arnaud M.B."/>
            <person name="Bates S."/>
            <person name="Brown A.J.P."/>
            <person name="Brunke S."/>
            <person name="Costanzo M.C."/>
            <person name="Fitzpatrick D.A."/>
            <person name="de Groot P.W.J."/>
            <person name="Harris D."/>
            <person name="Hoyer L.L."/>
            <person name="Hube B."/>
            <person name="Klis F.M."/>
            <person name="Kodira C."/>
            <person name="Lennard N."/>
            <person name="Logue M.E."/>
            <person name="Martin R."/>
            <person name="Neiman A.M."/>
            <person name="Nikolaou E."/>
            <person name="Quail M.A."/>
            <person name="Quinn J."/>
            <person name="Santos M.C."/>
            <person name="Schmitzberger F.F."/>
            <person name="Sherlock G."/>
            <person name="Shah P."/>
            <person name="Silverstein K.A.T."/>
            <person name="Skrzypek M.S."/>
            <person name="Soll D."/>
            <person name="Staggs R."/>
            <person name="Stansfield I."/>
            <person name="Stumpf M.P.H."/>
            <person name="Sudbery P.E."/>
            <person name="Srikantha T."/>
            <person name="Zeng Q."/>
            <person name="Berman J."/>
            <person name="Berriman M."/>
            <person name="Heitman J."/>
            <person name="Gow N.A.R."/>
            <person name="Lorenz M.C."/>
            <person name="Birren B.W."/>
            <person name="Kellis M."/>
            <person name="Cuomo C.A."/>
        </authorList>
    </citation>
    <scope>NUCLEOTIDE SEQUENCE [LARGE SCALE GENOMIC DNA]</scope>
    <source>
        <strain>ATCC MYA-3404 / T1</strain>
    </source>
</reference>
<dbReference type="EMBL" id="GG692396">
    <property type="protein sequence ID" value="EER35117.1"/>
    <property type="molecule type" value="Genomic_DNA"/>
</dbReference>
<dbReference type="RefSeq" id="XP_002547672.1">
    <property type="nucleotide sequence ID" value="XM_002547626.1"/>
</dbReference>
<dbReference type="EnsemblFungi" id="CTRG_01979-t43_1">
    <property type="protein sequence ID" value="CTRG_01979-t43_1-p1"/>
    <property type="gene ID" value="CTRG_01979"/>
</dbReference>
<dbReference type="GeneID" id="8296334"/>
<dbReference type="KEGG" id="ctp:CTRG_01979"/>
<dbReference type="VEuPathDB" id="FungiDB:CTRG_01979"/>
<dbReference type="eggNOG" id="ENOG502S7BF">
    <property type="taxonomic scope" value="Eukaryota"/>
</dbReference>
<dbReference type="HOGENOM" id="CLU_078554_0_0_1"/>
<dbReference type="OrthoDB" id="1926781at2759"/>
<dbReference type="Proteomes" id="UP000002037">
    <property type="component" value="Unassembled WGS sequence"/>
</dbReference>
<dbReference type="GO" id="GO:0005789">
    <property type="term" value="C:endoplasmic reticulum membrane"/>
    <property type="evidence" value="ECO:0007669"/>
    <property type="project" value="UniProtKB-SubCell"/>
</dbReference>
<dbReference type="InterPro" id="IPR005595">
    <property type="entry name" value="TRAP_alpha"/>
</dbReference>
<dbReference type="PANTHER" id="PTHR12924:SF0">
    <property type="entry name" value="TRANSLOCON-ASSOCIATED PROTEIN SUBUNIT ALPHA"/>
    <property type="match status" value="1"/>
</dbReference>
<dbReference type="PANTHER" id="PTHR12924">
    <property type="entry name" value="TRANSLOCON-ASSOCIATED PROTEIN, ALPHA SUBUNIT"/>
    <property type="match status" value="1"/>
</dbReference>
<dbReference type="Pfam" id="PF03896">
    <property type="entry name" value="TRAP_alpha"/>
    <property type="match status" value="1"/>
</dbReference>
<keyword id="KW-0256">Endoplasmic reticulum</keyword>
<keyword id="KW-0472">Membrane</keyword>
<keyword id="KW-1185">Reference proteome</keyword>
<keyword id="KW-0732">Signal</keyword>
<keyword id="KW-0812">Transmembrane</keyword>
<keyword id="KW-1133">Transmembrane helix</keyword>
<accession>C5M501</accession>
<protein>
    <recommendedName>
        <fullName>Increased recombination centers protein 22-2</fullName>
    </recommendedName>
</protein>
<organism>
    <name type="scientific">Candida tropicalis (strain ATCC MYA-3404 / T1)</name>
    <name type="common">Yeast</name>
    <dbReference type="NCBI Taxonomy" id="294747"/>
    <lineage>
        <taxon>Eukaryota</taxon>
        <taxon>Fungi</taxon>
        <taxon>Dikarya</taxon>
        <taxon>Ascomycota</taxon>
        <taxon>Saccharomycotina</taxon>
        <taxon>Pichiomycetes</taxon>
        <taxon>Debaryomycetaceae</taxon>
        <taxon>Candida/Lodderomyces clade</taxon>
        <taxon>Candida</taxon>
    </lineage>
</organism>
<sequence length="236" mass="25618">MKFSAILTALTATIATVAGYETSGKPHTVDILIDYSIKETPEISQTDVANWVNGQKYTLEYVVNNNEETEIAVVGVTGQFKNPVTNQIVTNLTTGQVGPIAVAPGESIKFEQIVDVDLIPDNYELIPHVFVAHDDLIKVIPCRGQLASIVDAAVSFFDPRLIFLELVLLATFGGIAYFVYEIWGKQYLRGTAPVKVPVKKSGSPVAVKEASPVGSASGFDESWIPEAHLKKNKKKA</sequence>
<gene>
    <name type="primary">IRC22-2</name>
    <name type="ORF">CTRG_01979</name>
</gene>
<name>IR222_CANTT</name>